<protein>
    <recommendedName>
        <fullName evidence="1">Probable chemoreceptor glutamine deamidase CheD</fullName>
        <ecNumber evidence="1">3.5.1.44</ecNumber>
    </recommendedName>
</protein>
<proteinExistence type="inferred from homology"/>
<sequence>MSEFTKEHFATNVYYDRTFDRDAAKILPGEYYYTGKDMLIVTVLGSCVSACIRDRVTGVGGMNHFMLPDSGADADSPVSASARYGTYAMEVLINDLLKAGAKRENLEAKVFGGGAVLRGFIAMNVGERNAQFVRDFLKVEGIRIIAEDLNDIHPRKVYYFPRSGKVLVKKLKQLNNNTLVNREQDYANRLQSNNVAGDIELFS</sequence>
<reference key="1">
    <citation type="journal article" date="2007" name="PLoS Genet.">
        <title>A tale of two oxidation states: bacterial colonization of arsenic-rich environments.</title>
        <authorList>
            <person name="Muller D."/>
            <person name="Medigue C."/>
            <person name="Koechler S."/>
            <person name="Barbe V."/>
            <person name="Barakat M."/>
            <person name="Talla E."/>
            <person name="Bonnefoy V."/>
            <person name="Krin E."/>
            <person name="Arsene-Ploetze F."/>
            <person name="Carapito C."/>
            <person name="Chandler M."/>
            <person name="Cournoyer B."/>
            <person name="Cruveiller S."/>
            <person name="Dossat C."/>
            <person name="Duval S."/>
            <person name="Heymann M."/>
            <person name="Leize E."/>
            <person name="Lieutaud A."/>
            <person name="Lievremont D."/>
            <person name="Makita Y."/>
            <person name="Mangenot S."/>
            <person name="Nitschke W."/>
            <person name="Ortet P."/>
            <person name="Perdrial N."/>
            <person name="Schoepp B."/>
            <person name="Siguier P."/>
            <person name="Simeonova D.D."/>
            <person name="Rouy Z."/>
            <person name="Segurens B."/>
            <person name="Turlin E."/>
            <person name="Vallenet D."/>
            <person name="van Dorsselaer A."/>
            <person name="Weiss S."/>
            <person name="Weissenbach J."/>
            <person name="Lett M.-C."/>
            <person name="Danchin A."/>
            <person name="Bertin P.N."/>
        </authorList>
    </citation>
    <scope>NUCLEOTIDE SEQUENCE [LARGE SCALE GENOMIC DNA]</scope>
    <source>
        <strain>ULPAs1</strain>
    </source>
</reference>
<dbReference type="EC" id="3.5.1.44" evidence="1"/>
<dbReference type="EMBL" id="CU207211">
    <property type="protein sequence ID" value="CAL61477.1"/>
    <property type="molecule type" value="Genomic_DNA"/>
</dbReference>
<dbReference type="SMR" id="A4G4P0"/>
<dbReference type="STRING" id="204773.HEAR1304"/>
<dbReference type="KEGG" id="har:HEAR1304"/>
<dbReference type="eggNOG" id="COG1871">
    <property type="taxonomic scope" value="Bacteria"/>
</dbReference>
<dbReference type="HOGENOM" id="CLU_087854_0_0_4"/>
<dbReference type="OrthoDB" id="9807202at2"/>
<dbReference type="Proteomes" id="UP000006697">
    <property type="component" value="Chromosome"/>
</dbReference>
<dbReference type="GO" id="GO:0050568">
    <property type="term" value="F:protein-glutamine glutaminase activity"/>
    <property type="evidence" value="ECO:0007669"/>
    <property type="project" value="UniProtKB-UniRule"/>
</dbReference>
<dbReference type="GO" id="GO:0006935">
    <property type="term" value="P:chemotaxis"/>
    <property type="evidence" value="ECO:0007669"/>
    <property type="project" value="UniProtKB-UniRule"/>
</dbReference>
<dbReference type="CDD" id="cd16352">
    <property type="entry name" value="CheD"/>
    <property type="match status" value="1"/>
</dbReference>
<dbReference type="Gene3D" id="3.30.1330.200">
    <property type="match status" value="1"/>
</dbReference>
<dbReference type="HAMAP" id="MF_01440">
    <property type="entry name" value="CheD"/>
    <property type="match status" value="1"/>
</dbReference>
<dbReference type="InterPro" id="IPR038592">
    <property type="entry name" value="CheD-like_sf"/>
</dbReference>
<dbReference type="InterPro" id="IPR005659">
    <property type="entry name" value="Chemorcpt_Glu_NH3ase_CheD"/>
</dbReference>
<dbReference type="InterPro" id="IPR011324">
    <property type="entry name" value="Cytotoxic_necrot_fac-like_cat"/>
</dbReference>
<dbReference type="NCBIfam" id="NF010013">
    <property type="entry name" value="PRK13487.1"/>
    <property type="match status" value="1"/>
</dbReference>
<dbReference type="NCBIfam" id="NF010014">
    <property type="entry name" value="PRK13489.1"/>
    <property type="match status" value="1"/>
</dbReference>
<dbReference type="PANTHER" id="PTHR35147">
    <property type="entry name" value="CHEMORECEPTOR GLUTAMINE DEAMIDASE CHED-RELATED"/>
    <property type="match status" value="1"/>
</dbReference>
<dbReference type="PANTHER" id="PTHR35147:SF2">
    <property type="entry name" value="CHEMORECEPTOR GLUTAMINE DEAMIDASE CHED-RELATED"/>
    <property type="match status" value="1"/>
</dbReference>
<dbReference type="Pfam" id="PF03975">
    <property type="entry name" value="CheD"/>
    <property type="match status" value="1"/>
</dbReference>
<dbReference type="SUPFAM" id="SSF64438">
    <property type="entry name" value="CNF1/YfiH-like putative cysteine hydrolases"/>
    <property type="match status" value="1"/>
</dbReference>
<comment type="function">
    <text evidence="1">Probably deamidates glutamine residues to glutamate on methyl-accepting chemotaxis receptors (MCPs), playing an important role in chemotaxis.</text>
</comment>
<comment type="catalytic activity">
    <reaction evidence="1">
        <text>L-glutaminyl-[protein] + H2O = L-glutamyl-[protein] + NH4(+)</text>
        <dbReference type="Rhea" id="RHEA:16441"/>
        <dbReference type="Rhea" id="RHEA-COMP:10207"/>
        <dbReference type="Rhea" id="RHEA-COMP:10208"/>
        <dbReference type="ChEBI" id="CHEBI:15377"/>
        <dbReference type="ChEBI" id="CHEBI:28938"/>
        <dbReference type="ChEBI" id="CHEBI:29973"/>
        <dbReference type="ChEBI" id="CHEBI:30011"/>
        <dbReference type="EC" id="3.5.1.44"/>
    </reaction>
</comment>
<comment type="similarity">
    <text evidence="1">Belongs to the CheD family.</text>
</comment>
<accession>A4G4P0</accession>
<name>CHED_HERAR</name>
<feature type="chain" id="PRO_1000068551" description="Probable chemoreceptor glutamine deamidase CheD">
    <location>
        <begin position="1"/>
        <end position="203"/>
    </location>
</feature>
<keyword id="KW-0145">Chemotaxis</keyword>
<keyword id="KW-0378">Hydrolase</keyword>
<keyword id="KW-1185">Reference proteome</keyword>
<gene>
    <name evidence="1" type="primary">cheD</name>
    <name type="ordered locus">HEAR1304</name>
</gene>
<evidence type="ECO:0000255" key="1">
    <source>
        <dbReference type="HAMAP-Rule" id="MF_01440"/>
    </source>
</evidence>
<organism>
    <name type="scientific">Herminiimonas arsenicoxydans</name>
    <dbReference type="NCBI Taxonomy" id="204773"/>
    <lineage>
        <taxon>Bacteria</taxon>
        <taxon>Pseudomonadati</taxon>
        <taxon>Pseudomonadota</taxon>
        <taxon>Betaproteobacteria</taxon>
        <taxon>Burkholderiales</taxon>
        <taxon>Oxalobacteraceae</taxon>
        <taxon>Herminiimonas</taxon>
    </lineage>
</organism>